<evidence type="ECO:0000255" key="1">
    <source>
        <dbReference type="HAMAP-Rule" id="MF_01576"/>
    </source>
</evidence>
<proteinExistence type="inferred from homology"/>
<feature type="chain" id="PRO_0000268449" description="Bifunctional protein FolD 2">
    <location>
        <begin position="1"/>
        <end position="300"/>
    </location>
</feature>
<feature type="binding site" evidence="1">
    <location>
        <begin position="165"/>
        <end position="167"/>
    </location>
    <ligand>
        <name>NADP(+)</name>
        <dbReference type="ChEBI" id="CHEBI:58349"/>
    </ligand>
</feature>
<feature type="binding site" evidence="1">
    <location>
        <position position="190"/>
    </location>
    <ligand>
        <name>NADP(+)</name>
        <dbReference type="ChEBI" id="CHEBI:58349"/>
    </ligand>
</feature>
<feature type="binding site" evidence="1">
    <location>
        <position position="231"/>
    </location>
    <ligand>
        <name>NADP(+)</name>
        <dbReference type="ChEBI" id="CHEBI:58349"/>
    </ligand>
</feature>
<sequence>MSARIIDGKAAAARVLEQVSTEVKILKADGIEPALAVILVGNDPASEVYVRNKILRAEEAGIRSLEHRLPAKSSQAQVLALIAELNADDSVNGILLQLPLPSHMEEARALQAIDPGKDVDGFHSENVGGLSQGRSVLTPCTPSGCMHLLEETCGDLSGKHAVVIGRSNIVGKPMAALLLQAHCSVTVVHSRSTDAKALCQLADIVVAAVGRPRMIDASWLKPGAVVIDVGINRIEDQGRSRLVGDIDFDNALSVASAITPVPGGVGPMTIAFLMKNTVTAARQQALAQRSQSEAVCLSTC</sequence>
<dbReference type="EC" id="1.5.1.5" evidence="1"/>
<dbReference type="EC" id="3.5.4.9" evidence="1"/>
<dbReference type="EMBL" id="CP000058">
    <property type="protein sequence ID" value="AAZ37909.1"/>
    <property type="molecule type" value="Genomic_DNA"/>
</dbReference>
<dbReference type="SMR" id="Q48HJ1"/>
<dbReference type="KEGG" id="psp:PSPPH_2961"/>
<dbReference type="eggNOG" id="COG0190">
    <property type="taxonomic scope" value="Bacteria"/>
</dbReference>
<dbReference type="HOGENOM" id="CLU_034045_2_1_6"/>
<dbReference type="UniPathway" id="UPA00193"/>
<dbReference type="Proteomes" id="UP000000551">
    <property type="component" value="Chromosome"/>
</dbReference>
<dbReference type="GO" id="GO:0005829">
    <property type="term" value="C:cytosol"/>
    <property type="evidence" value="ECO:0007669"/>
    <property type="project" value="TreeGrafter"/>
</dbReference>
<dbReference type="GO" id="GO:0004477">
    <property type="term" value="F:methenyltetrahydrofolate cyclohydrolase activity"/>
    <property type="evidence" value="ECO:0007669"/>
    <property type="project" value="UniProtKB-UniRule"/>
</dbReference>
<dbReference type="GO" id="GO:0004488">
    <property type="term" value="F:methylenetetrahydrofolate dehydrogenase (NADP+) activity"/>
    <property type="evidence" value="ECO:0007669"/>
    <property type="project" value="UniProtKB-UniRule"/>
</dbReference>
<dbReference type="GO" id="GO:0000105">
    <property type="term" value="P:L-histidine biosynthetic process"/>
    <property type="evidence" value="ECO:0007669"/>
    <property type="project" value="UniProtKB-KW"/>
</dbReference>
<dbReference type="GO" id="GO:0009086">
    <property type="term" value="P:methionine biosynthetic process"/>
    <property type="evidence" value="ECO:0007669"/>
    <property type="project" value="UniProtKB-KW"/>
</dbReference>
<dbReference type="GO" id="GO:0006164">
    <property type="term" value="P:purine nucleotide biosynthetic process"/>
    <property type="evidence" value="ECO:0007669"/>
    <property type="project" value="UniProtKB-KW"/>
</dbReference>
<dbReference type="GO" id="GO:0035999">
    <property type="term" value="P:tetrahydrofolate interconversion"/>
    <property type="evidence" value="ECO:0007669"/>
    <property type="project" value="UniProtKB-UniRule"/>
</dbReference>
<dbReference type="CDD" id="cd01080">
    <property type="entry name" value="NAD_bind_m-THF_DH_Cyclohyd"/>
    <property type="match status" value="1"/>
</dbReference>
<dbReference type="FunFam" id="3.40.50.720:FF:000006">
    <property type="entry name" value="Bifunctional protein FolD"/>
    <property type="match status" value="1"/>
</dbReference>
<dbReference type="FunFam" id="3.40.50.10860:FF:000005">
    <property type="entry name" value="C-1-tetrahydrofolate synthase, cytoplasmic, putative"/>
    <property type="match status" value="1"/>
</dbReference>
<dbReference type="Gene3D" id="3.40.50.10860">
    <property type="entry name" value="Leucine Dehydrogenase, chain A, domain 1"/>
    <property type="match status" value="1"/>
</dbReference>
<dbReference type="Gene3D" id="3.40.50.720">
    <property type="entry name" value="NAD(P)-binding Rossmann-like Domain"/>
    <property type="match status" value="1"/>
</dbReference>
<dbReference type="HAMAP" id="MF_01576">
    <property type="entry name" value="THF_DHG_CYH"/>
    <property type="match status" value="1"/>
</dbReference>
<dbReference type="InterPro" id="IPR046346">
    <property type="entry name" value="Aminoacid_DH-like_N_sf"/>
</dbReference>
<dbReference type="InterPro" id="IPR036291">
    <property type="entry name" value="NAD(P)-bd_dom_sf"/>
</dbReference>
<dbReference type="InterPro" id="IPR000672">
    <property type="entry name" value="THF_DH/CycHdrlase"/>
</dbReference>
<dbReference type="InterPro" id="IPR020630">
    <property type="entry name" value="THF_DH/CycHdrlase_cat_dom"/>
</dbReference>
<dbReference type="InterPro" id="IPR020867">
    <property type="entry name" value="THF_DH/CycHdrlase_CS"/>
</dbReference>
<dbReference type="InterPro" id="IPR020631">
    <property type="entry name" value="THF_DH/CycHdrlase_NAD-bd_dom"/>
</dbReference>
<dbReference type="NCBIfam" id="NF008058">
    <property type="entry name" value="PRK10792.1"/>
    <property type="match status" value="1"/>
</dbReference>
<dbReference type="NCBIfam" id="NF010783">
    <property type="entry name" value="PRK14186.1"/>
    <property type="match status" value="1"/>
</dbReference>
<dbReference type="NCBIfam" id="NF010785">
    <property type="entry name" value="PRK14188.1"/>
    <property type="match status" value="1"/>
</dbReference>
<dbReference type="NCBIfam" id="NF010790">
    <property type="entry name" value="PRK14194.1"/>
    <property type="match status" value="1"/>
</dbReference>
<dbReference type="PANTHER" id="PTHR48099:SF5">
    <property type="entry name" value="C-1-TETRAHYDROFOLATE SYNTHASE, CYTOPLASMIC"/>
    <property type="match status" value="1"/>
</dbReference>
<dbReference type="PANTHER" id="PTHR48099">
    <property type="entry name" value="C-1-TETRAHYDROFOLATE SYNTHASE, CYTOPLASMIC-RELATED"/>
    <property type="match status" value="1"/>
</dbReference>
<dbReference type="Pfam" id="PF00763">
    <property type="entry name" value="THF_DHG_CYH"/>
    <property type="match status" value="1"/>
</dbReference>
<dbReference type="Pfam" id="PF02882">
    <property type="entry name" value="THF_DHG_CYH_C"/>
    <property type="match status" value="1"/>
</dbReference>
<dbReference type="PRINTS" id="PR00085">
    <property type="entry name" value="THFDHDRGNASE"/>
</dbReference>
<dbReference type="SUPFAM" id="SSF53223">
    <property type="entry name" value="Aminoacid dehydrogenase-like, N-terminal domain"/>
    <property type="match status" value="1"/>
</dbReference>
<dbReference type="SUPFAM" id="SSF51735">
    <property type="entry name" value="NAD(P)-binding Rossmann-fold domains"/>
    <property type="match status" value="1"/>
</dbReference>
<dbReference type="PROSITE" id="PS00766">
    <property type="entry name" value="THF_DHG_CYH_1"/>
    <property type="match status" value="1"/>
</dbReference>
<dbReference type="PROSITE" id="PS00767">
    <property type="entry name" value="THF_DHG_CYH_2"/>
    <property type="match status" value="1"/>
</dbReference>
<accession>Q48HJ1</accession>
<keyword id="KW-0028">Amino-acid biosynthesis</keyword>
<keyword id="KW-0368">Histidine biosynthesis</keyword>
<keyword id="KW-0378">Hydrolase</keyword>
<keyword id="KW-0486">Methionine biosynthesis</keyword>
<keyword id="KW-0511">Multifunctional enzyme</keyword>
<keyword id="KW-0521">NADP</keyword>
<keyword id="KW-0554">One-carbon metabolism</keyword>
<keyword id="KW-0560">Oxidoreductase</keyword>
<keyword id="KW-0658">Purine biosynthesis</keyword>
<protein>
    <recommendedName>
        <fullName evidence="1">Bifunctional protein FolD 2</fullName>
    </recommendedName>
    <domain>
        <recommendedName>
            <fullName evidence="1">Methylenetetrahydrofolate dehydrogenase</fullName>
            <ecNumber evidence="1">1.5.1.5</ecNumber>
        </recommendedName>
    </domain>
    <domain>
        <recommendedName>
            <fullName evidence="1">Methenyltetrahydrofolate cyclohydrolase</fullName>
            <ecNumber evidence="1">3.5.4.9</ecNumber>
        </recommendedName>
    </domain>
</protein>
<comment type="function">
    <text evidence="1">Catalyzes the oxidation of 5,10-methylenetetrahydrofolate to 5,10-methenyltetrahydrofolate and then the hydrolysis of 5,10-methenyltetrahydrofolate to 10-formyltetrahydrofolate.</text>
</comment>
<comment type="catalytic activity">
    <reaction evidence="1">
        <text>(6R)-5,10-methylene-5,6,7,8-tetrahydrofolate + NADP(+) = (6R)-5,10-methenyltetrahydrofolate + NADPH</text>
        <dbReference type="Rhea" id="RHEA:22812"/>
        <dbReference type="ChEBI" id="CHEBI:15636"/>
        <dbReference type="ChEBI" id="CHEBI:57455"/>
        <dbReference type="ChEBI" id="CHEBI:57783"/>
        <dbReference type="ChEBI" id="CHEBI:58349"/>
        <dbReference type="EC" id="1.5.1.5"/>
    </reaction>
</comment>
<comment type="catalytic activity">
    <reaction evidence="1">
        <text>(6R)-5,10-methenyltetrahydrofolate + H2O = (6R)-10-formyltetrahydrofolate + H(+)</text>
        <dbReference type="Rhea" id="RHEA:23700"/>
        <dbReference type="ChEBI" id="CHEBI:15377"/>
        <dbReference type="ChEBI" id="CHEBI:15378"/>
        <dbReference type="ChEBI" id="CHEBI:57455"/>
        <dbReference type="ChEBI" id="CHEBI:195366"/>
        <dbReference type="EC" id="3.5.4.9"/>
    </reaction>
</comment>
<comment type="pathway">
    <text evidence="1">One-carbon metabolism; tetrahydrofolate interconversion.</text>
</comment>
<comment type="subunit">
    <text evidence="1">Homodimer.</text>
</comment>
<comment type="similarity">
    <text evidence="1">Belongs to the tetrahydrofolate dehydrogenase/cyclohydrolase family.</text>
</comment>
<reference key="1">
    <citation type="journal article" date="2005" name="J. Bacteriol.">
        <title>Whole-genome sequence analysis of Pseudomonas syringae pv. phaseolicola 1448A reveals divergence among pathovars in genes involved in virulence and transposition.</title>
        <authorList>
            <person name="Joardar V."/>
            <person name="Lindeberg M."/>
            <person name="Jackson R.W."/>
            <person name="Selengut J."/>
            <person name="Dodson R."/>
            <person name="Brinkac L.M."/>
            <person name="Daugherty S.C."/>
            <person name="DeBoy R.T."/>
            <person name="Durkin A.S."/>
            <person name="Gwinn Giglio M."/>
            <person name="Madupu R."/>
            <person name="Nelson W.C."/>
            <person name="Rosovitz M.J."/>
            <person name="Sullivan S.A."/>
            <person name="Crabtree J."/>
            <person name="Creasy T."/>
            <person name="Davidsen T.M."/>
            <person name="Haft D.H."/>
            <person name="Zafar N."/>
            <person name="Zhou L."/>
            <person name="Halpin R."/>
            <person name="Holley T."/>
            <person name="Khouri H.M."/>
            <person name="Feldblyum T.V."/>
            <person name="White O."/>
            <person name="Fraser C.M."/>
            <person name="Chatterjee A.K."/>
            <person name="Cartinhour S."/>
            <person name="Schneider D."/>
            <person name="Mansfield J.W."/>
            <person name="Collmer A."/>
            <person name="Buell R."/>
        </authorList>
    </citation>
    <scope>NUCLEOTIDE SEQUENCE [LARGE SCALE GENOMIC DNA]</scope>
    <source>
        <strain>1448A / Race 6</strain>
    </source>
</reference>
<name>FOLD2_PSE14</name>
<gene>
    <name evidence="1" type="primary">folD2</name>
    <name type="ordered locus">PSPPH_2961</name>
</gene>
<organism>
    <name type="scientific">Pseudomonas savastanoi pv. phaseolicola (strain 1448A / Race 6)</name>
    <name type="common">Pseudomonas syringae pv. phaseolicola (strain 1448A / Race 6)</name>
    <dbReference type="NCBI Taxonomy" id="264730"/>
    <lineage>
        <taxon>Bacteria</taxon>
        <taxon>Pseudomonadati</taxon>
        <taxon>Pseudomonadota</taxon>
        <taxon>Gammaproteobacteria</taxon>
        <taxon>Pseudomonadales</taxon>
        <taxon>Pseudomonadaceae</taxon>
        <taxon>Pseudomonas</taxon>
    </lineage>
</organism>